<sequence>MALLQIAEPGQTAAPHQHRLAVGIDLGTTNSLVASVRSGQTQVLLDDQERALVPSVVHYGEQQKTVGIEAFAQASLDPQNTVISAKRLIGRSLADVQTRYPDLPYQFIASDNGLPLIQTKQGNKSPVEVSADILSHLNRFAEQRLGGELSGVVITVPAYFDDAQRQSTKDAARLAGLNVLRLLNEPTAAAIAYGLDSGQEGVIAVYDLGGGTFDISILRLSRGVFEVLATGGDTALGGDDFDHLLADWIAQQANYQPQNANEQRELLTLATQTKVALSQAVETEVKFANWQGTVSREQFNELIQLLVKRSLMTCRRALKDAGVEGEEIREVVMVGGSTRVPFVREQVGEFFGKQPLTSIDPDKVVALGAAIQADILVGNKPDSEMLLLDVVPLSLGIETMGGLVEKIIPRNMTIPVARAQEFTTAKDGQTAMSVHVLQGERELVEDCRSLGRFTLRGIPPMVAGAATIRVTYQVDADGLLSVTAMEKSTKVQASIQIKPSYGLTDEEVTQMIKSSMTNAKEDMEARQLAEQRVEADRTIDTVISALQQDGAEVLSVEEFKLIEAEIAKLIQLKQGTDRQAIAQGVKDLDLATQTFAAKRMNLSIQKALAGKAVDEII</sequence>
<keyword id="KW-0067">ATP-binding</keyword>
<keyword id="KW-0143">Chaperone</keyword>
<keyword id="KW-0547">Nucleotide-binding</keyword>
<dbReference type="EMBL" id="CP000687">
    <property type="protein sequence ID" value="ABY69493.1"/>
    <property type="molecule type" value="Genomic_DNA"/>
</dbReference>
<dbReference type="RefSeq" id="WP_009874858.1">
    <property type="nucleotide sequence ID" value="NC_010278.1"/>
</dbReference>
<dbReference type="SMR" id="B0BPK8"/>
<dbReference type="KEGG" id="apj:APJL_0935"/>
<dbReference type="PATRIC" id="fig|416269.6.peg.966"/>
<dbReference type="HOGENOM" id="CLU_005965_2_3_6"/>
<dbReference type="Proteomes" id="UP000008547">
    <property type="component" value="Chromosome"/>
</dbReference>
<dbReference type="GO" id="GO:0005524">
    <property type="term" value="F:ATP binding"/>
    <property type="evidence" value="ECO:0007669"/>
    <property type="project" value="UniProtKB-KW"/>
</dbReference>
<dbReference type="GO" id="GO:0016887">
    <property type="term" value="F:ATP hydrolysis activity"/>
    <property type="evidence" value="ECO:0007669"/>
    <property type="project" value="UniProtKB-UniRule"/>
</dbReference>
<dbReference type="GO" id="GO:0140662">
    <property type="term" value="F:ATP-dependent protein folding chaperone"/>
    <property type="evidence" value="ECO:0007669"/>
    <property type="project" value="InterPro"/>
</dbReference>
<dbReference type="GO" id="GO:0051082">
    <property type="term" value="F:unfolded protein binding"/>
    <property type="evidence" value="ECO:0007669"/>
    <property type="project" value="InterPro"/>
</dbReference>
<dbReference type="GO" id="GO:0016226">
    <property type="term" value="P:iron-sulfur cluster assembly"/>
    <property type="evidence" value="ECO:0007669"/>
    <property type="project" value="InterPro"/>
</dbReference>
<dbReference type="CDD" id="cd10236">
    <property type="entry name" value="ASKHA_NBD_HSP70_HscA"/>
    <property type="match status" value="1"/>
</dbReference>
<dbReference type="FunFam" id="3.30.420.40:FF:000046">
    <property type="entry name" value="Chaperone protein HscA"/>
    <property type="match status" value="1"/>
</dbReference>
<dbReference type="FunFam" id="2.60.34.10:FF:000005">
    <property type="entry name" value="Chaperone protein HscA homolog"/>
    <property type="match status" value="1"/>
</dbReference>
<dbReference type="FunFam" id="3.30.420.40:FF:000020">
    <property type="entry name" value="Chaperone protein HscA homolog"/>
    <property type="match status" value="1"/>
</dbReference>
<dbReference type="Gene3D" id="1.20.1270.10">
    <property type="match status" value="1"/>
</dbReference>
<dbReference type="Gene3D" id="3.30.420.40">
    <property type="match status" value="2"/>
</dbReference>
<dbReference type="Gene3D" id="3.90.640.10">
    <property type="entry name" value="Actin, Chain A, domain 4"/>
    <property type="match status" value="1"/>
</dbReference>
<dbReference type="Gene3D" id="2.60.34.10">
    <property type="entry name" value="Substrate Binding Domain Of DNAk, Chain A, domain 1"/>
    <property type="match status" value="1"/>
</dbReference>
<dbReference type="HAMAP" id="MF_00679">
    <property type="entry name" value="HscA"/>
    <property type="match status" value="1"/>
</dbReference>
<dbReference type="InterPro" id="IPR043129">
    <property type="entry name" value="ATPase_NBD"/>
</dbReference>
<dbReference type="InterPro" id="IPR018181">
    <property type="entry name" value="Heat_shock_70_CS"/>
</dbReference>
<dbReference type="InterPro" id="IPR042039">
    <property type="entry name" value="HscA_NBD"/>
</dbReference>
<dbReference type="InterPro" id="IPR029048">
    <property type="entry name" value="HSP70_C_sf"/>
</dbReference>
<dbReference type="InterPro" id="IPR029047">
    <property type="entry name" value="HSP70_peptide-bd_sf"/>
</dbReference>
<dbReference type="InterPro" id="IPR013126">
    <property type="entry name" value="Hsp_70_fam"/>
</dbReference>
<dbReference type="InterPro" id="IPR010236">
    <property type="entry name" value="ISC_FeS_clus_asmbl_HscA"/>
</dbReference>
<dbReference type="NCBIfam" id="TIGR01991">
    <property type="entry name" value="HscA"/>
    <property type="match status" value="1"/>
</dbReference>
<dbReference type="NCBIfam" id="NF003520">
    <property type="entry name" value="PRK05183.1"/>
    <property type="match status" value="1"/>
</dbReference>
<dbReference type="PANTHER" id="PTHR19375">
    <property type="entry name" value="HEAT SHOCK PROTEIN 70KDA"/>
    <property type="match status" value="1"/>
</dbReference>
<dbReference type="Pfam" id="PF00012">
    <property type="entry name" value="HSP70"/>
    <property type="match status" value="1"/>
</dbReference>
<dbReference type="PRINTS" id="PR00301">
    <property type="entry name" value="HEATSHOCK70"/>
</dbReference>
<dbReference type="SUPFAM" id="SSF53067">
    <property type="entry name" value="Actin-like ATPase domain"/>
    <property type="match status" value="2"/>
</dbReference>
<dbReference type="SUPFAM" id="SSF100934">
    <property type="entry name" value="Heat shock protein 70kD (HSP70), C-terminal subdomain"/>
    <property type="match status" value="1"/>
</dbReference>
<dbReference type="SUPFAM" id="SSF100920">
    <property type="entry name" value="Heat shock protein 70kD (HSP70), peptide-binding domain"/>
    <property type="match status" value="1"/>
</dbReference>
<dbReference type="PROSITE" id="PS00297">
    <property type="entry name" value="HSP70_1"/>
    <property type="match status" value="1"/>
</dbReference>
<dbReference type="PROSITE" id="PS00329">
    <property type="entry name" value="HSP70_2"/>
    <property type="match status" value="1"/>
</dbReference>
<dbReference type="PROSITE" id="PS01036">
    <property type="entry name" value="HSP70_3"/>
    <property type="match status" value="1"/>
</dbReference>
<accession>B0BPK8</accession>
<proteinExistence type="inferred from homology"/>
<name>HSCA_ACTPJ</name>
<gene>
    <name evidence="1" type="primary">hscA</name>
    <name type="ordered locus">APJL_0935</name>
</gene>
<organism>
    <name type="scientific">Actinobacillus pleuropneumoniae serotype 3 (strain JL03)</name>
    <dbReference type="NCBI Taxonomy" id="434271"/>
    <lineage>
        <taxon>Bacteria</taxon>
        <taxon>Pseudomonadati</taxon>
        <taxon>Pseudomonadota</taxon>
        <taxon>Gammaproteobacteria</taxon>
        <taxon>Pasteurellales</taxon>
        <taxon>Pasteurellaceae</taxon>
        <taxon>Actinobacillus</taxon>
    </lineage>
</organism>
<reference key="1">
    <citation type="journal article" date="2008" name="PLoS ONE">
        <title>Genome biology of Actinobacillus pleuropneumoniae JL03, an isolate of serotype 3 prevalent in China.</title>
        <authorList>
            <person name="Xu Z."/>
            <person name="Zhou Y."/>
            <person name="Li L."/>
            <person name="Zhou R."/>
            <person name="Xiao S."/>
            <person name="Wan Y."/>
            <person name="Zhang S."/>
            <person name="Wang K."/>
            <person name="Li W."/>
            <person name="Li L."/>
            <person name="Jin H."/>
            <person name="Kang M."/>
            <person name="Dalai B."/>
            <person name="Li T."/>
            <person name="Liu L."/>
            <person name="Cheng Y."/>
            <person name="Zhang L."/>
            <person name="Xu T."/>
            <person name="Zheng H."/>
            <person name="Pu S."/>
            <person name="Wang B."/>
            <person name="Gu W."/>
            <person name="Zhang X.L."/>
            <person name="Zhu G.-F."/>
            <person name="Wang S."/>
            <person name="Zhao G.-P."/>
            <person name="Chen H."/>
        </authorList>
    </citation>
    <scope>NUCLEOTIDE SEQUENCE [LARGE SCALE GENOMIC DNA]</scope>
    <source>
        <strain>JL03</strain>
    </source>
</reference>
<comment type="function">
    <text evidence="1">Chaperone involved in the maturation of iron-sulfur cluster-containing proteins. Has a low intrinsic ATPase activity which is markedly stimulated by HscB.</text>
</comment>
<comment type="similarity">
    <text evidence="1">Belongs to the heat shock protein 70 family.</text>
</comment>
<protein>
    <recommendedName>
        <fullName evidence="1">Chaperone protein HscA homolog</fullName>
    </recommendedName>
</protein>
<feature type="chain" id="PRO_1000131663" description="Chaperone protein HscA homolog">
    <location>
        <begin position="1"/>
        <end position="617"/>
    </location>
</feature>
<evidence type="ECO:0000255" key="1">
    <source>
        <dbReference type="HAMAP-Rule" id="MF_00679"/>
    </source>
</evidence>